<proteinExistence type="predicted"/>
<accession>O31941</accession>
<organism>
    <name type="scientific">Bacillus subtilis (strain 168)</name>
    <dbReference type="NCBI Taxonomy" id="224308"/>
    <lineage>
        <taxon>Bacteria</taxon>
        <taxon>Bacillati</taxon>
        <taxon>Bacillota</taxon>
        <taxon>Bacilli</taxon>
        <taxon>Bacillales</taxon>
        <taxon>Bacillaceae</taxon>
        <taxon>Bacillus</taxon>
    </lineage>
</organism>
<protein>
    <recommendedName>
        <fullName>SPbeta prophage-derived uncharacterized protein YonT</fullName>
    </recommendedName>
</protein>
<name>YONT_BACSU</name>
<gene>
    <name type="primary">yonT</name>
    <name type="ordered locus">BSU21000</name>
</gene>
<comment type="subcellular location">
    <subcellularLocation>
        <location evidence="3">Cell membrane</location>
        <topology evidence="3">Single-pass membrane protein</topology>
    </subcellularLocation>
</comment>
<keyword id="KW-1003">Cell membrane</keyword>
<keyword id="KW-0472">Membrane</keyword>
<keyword id="KW-1185">Reference proteome</keyword>
<keyword id="KW-0812">Transmembrane</keyword>
<keyword id="KW-1133">Transmembrane helix</keyword>
<dbReference type="EMBL" id="AL009126">
    <property type="protein sequence ID" value="CAB14018.1"/>
    <property type="molecule type" value="Genomic_DNA"/>
</dbReference>
<dbReference type="RefSeq" id="WP_009967515.1">
    <property type="nucleotide sequence ID" value="NZ_OZ025638.1"/>
</dbReference>
<dbReference type="SMR" id="O31941"/>
<dbReference type="FunCoup" id="O31941">
    <property type="interactions" value="5"/>
</dbReference>
<dbReference type="STRING" id="224308.BSU21000"/>
<dbReference type="PaxDb" id="224308-BSU21000"/>
<dbReference type="EnsemblBacteria" id="CAB14018">
    <property type="protein sequence ID" value="CAB14018"/>
    <property type="gene ID" value="BSU_21000"/>
</dbReference>
<dbReference type="GeneID" id="939172"/>
<dbReference type="KEGG" id="bsu:BSU21000"/>
<dbReference type="PATRIC" id="fig|224308.179.peg.2293"/>
<dbReference type="InParanoid" id="O31941"/>
<dbReference type="OrthoDB" id="2942047at2"/>
<dbReference type="BioCyc" id="BSUB:BSU21000-MONOMER"/>
<dbReference type="Proteomes" id="UP000001570">
    <property type="component" value="Chromosome"/>
</dbReference>
<dbReference type="GO" id="GO:0005886">
    <property type="term" value="C:plasma membrane"/>
    <property type="evidence" value="ECO:0007669"/>
    <property type="project" value="UniProtKB-SubCell"/>
</dbReference>
<dbReference type="NCBIfam" id="NF047537">
    <property type="entry name" value="YonT_type_I_tox"/>
    <property type="match status" value="1"/>
</dbReference>
<feature type="chain" id="PRO_0000360455" description="SPbeta prophage-derived uncharacterized protein YonT">
    <location>
        <begin position="1"/>
        <end position="58"/>
    </location>
</feature>
<feature type="transmembrane region" description="Helical" evidence="1">
    <location>
        <begin position="6"/>
        <end position="26"/>
    </location>
</feature>
<feature type="region of interest" description="Disordered" evidence="2">
    <location>
        <begin position="35"/>
        <end position="58"/>
    </location>
</feature>
<feature type="compositionally biased region" description="Basic residues" evidence="2">
    <location>
        <begin position="36"/>
        <end position="58"/>
    </location>
</feature>
<evidence type="ECO:0000255" key="1"/>
<evidence type="ECO:0000256" key="2">
    <source>
        <dbReference type="SAM" id="MobiDB-lite"/>
    </source>
</evidence>
<evidence type="ECO:0000305" key="3"/>
<reference key="1">
    <citation type="journal article" date="1997" name="Nature">
        <title>The complete genome sequence of the Gram-positive bacterium Bacillus subtilis.</title>
        <authorList>
            <person name="Kunst F."/>
            <person name="Ogasawara N."/>
            <person name="Moszer I."/>
            <person name="Albertini A.M."/>
            <person name="Alloni G."/>
            <person name="Azevedo V."/>
            <person name="Bertero M.G."/>
            <person name="Bessieres P."/>
            <person name="Bolotin A."/>
            <person name="Borchert S."/>
            <person name="Borriss R."/>
            <person name="Boursier L."/>
            <person name="Brans A."/>
            <person name="Braun M."/>
            <person name="Brignell S.C."/>
            <person name="Bron S."/>
            <person name="Brouillet S."/>
            <person name="Bruschi C.V."/>
            <person name="Caldwell B."/>
            <person name="Capuano V."/>
            <person name="Carter N.M."/>
            <person name="Choi S.-K."/>
            <person name="Codani J.-J."/>
            <person name="Connerton I.F."/>
            <person name="Cummings N.J."/>
            <person name="Daniel R.A."/>
            <person name="Denizot F."/>
            <person name="Devine K.M."/>
            <person name="Duesterhoeft A."/>
            <person name="Ehrlich S.D."/>
            <person name="Emmerson P.T."/>
            <person name="Entian K.-D."/>
            <person name="Errington J."/>
            <person name="Fabret C."/>
            <person name="Ferrari E."/>
            <person name="Foulger D."/>
            <person name="Fritz C."/>
            <person name="Fujita M."/>
            <person name="Fujita Y."/>
            <person name="Fuma S."/>
            <person name="Galizzi A."/>
            <person name="Galleron N."/>
            <person name="Ghim S.-Y."/>
            <person name="Glaser P."/>
            <person name="Goffeau A."/>
            <person name="Golightly E.J."/>
            <person name="Grandi G."/>
            <person name="Guiseppi G."/>
            <person name="Guy B.J."/>
            <person name="Haga K."/>
            <person name="Haiech J."/>
            <person name="Harwood C.R."/>
            <person name="Henaut A."/>
            <person name="Hilbert H."/>
            <person name="Holsappel S."/>
            <person name="Hosono S."/>
            <person name="Hullo M.-F."/>
            <person name="Itaya M."/>
            <person name="Jones L.-M."/>
            <person name="Joris B."/>
            <person name="Karamata D."/>
            <person name="Kasahara Y."/>
            <person name="Klaerr-Blanchard M."/>
            <person name="Klein C."/>
            <person name="Kobayashi Y."/>
            <person name="Koetter P."/>
            <person name="Koningstein G."/>
            <person name="Krogh S."/>
            <person name="Kumano M."/>
            <person name="Kurita K."/>
            <person name="Lapidus A."/>
            <person name="Lardinois S."/>
            <person name="Lauber J."/>
            <person name="Lazarevic V."/>
            <person name="Lee S.-M."/>
            <person name="Levine A."/>
            <person name="Liu H."/>
            <person name="Masuda S."/>
            <person name="Mauel C."/>
            <person name="Medigue C."/>
            <person name="Medina N."/>
            <person name="Mellado R.P."/>
            <person name="Mizuno M."/>
            <person name="Moestl D."/>
            <person name="Nakai S."/>
            <person name="Noback M."/>
            <person name="Noone D."/>
            <person name="O'Reilly M."/>
            <person name="Ogawa K."/>
            <person name="Ogiwara A."/>
            <person name="Oudega B."/>
            <person name="Park S.-H."/>
            <person name="Parro V."/>
            <person name="Pohl T.M."/>
            <person name="Portetelle D."/>
            <person name="Porwollik S."/>
            <person name="Prescott A.M."/>
            <person name="Presecan E."/>
            <person name="Pujic P."/>
            <person name="Purnelle B."/>
            <person name="Rapoport G."/>
            <person name="Rey M."/>
            <person name="Reynolds S."/>
            <person name="Rieger M."/>
            <person name="Rivolta C."/>
            <person name="Rocha E."/>
            <person name="Roche B."/>
            <person name="Rose M."/>
            <person name="Sadaie Y."/>
            <person name="Sato T."/>
            <person name="Scanlan E."/>
            <person name="Schleich S."/>
            <person name="Schroeter R."/>
            <person name="Scoffone F."/>
            <person name="Sekiguchi J."/>
            <person name="Sekowska A."/>
            <person name="Seror S.J."/>
            <person name="Serror P."/>
            <person name="Shin B.-S."/>
            <person name="Soldo B."/>
            <person name="Sorokin A."/>
            <person name="Tacconi E."/>
            <person name="Takagi T."/>
            <person name="Takahashi H."/>
            <person name="Takemaru K."/>
            <person name="Takeuchi M."/>
            <person name="Tamakoshi A."/>
            <person name="Tanaka T."/>
            <person name="Terpstra P."/>
            <person name="Tognoni A."/>
            <person name="Tosato V."/>
            <person name="Uchiyama S."/>
            <person name="Vandenbol M."/>
            <person name="Vannier F."/>
            <person name="Vassarotti A."/>
            <person name="Viari A."/>
            <person name="Wambutt R."/>
            <person name="Wedler E."/>
            <person name="Wedler H."/>
            <person name="Weitzenegger T."/>
            <person name="Winters P."/>
            <person name="Wipat A."/>
            <person name="Yamamoto H."/>
            <person name="Yamane K."/>
            <person name="Yasumoto K."/>
            <person name="Yata K."/>
            <person name="Yoshida K."/>
            <person name="Yoshikawa H.-F."/>
            <person name="Zumstein E."/>
            <person name="Yoshikawa H."/>
            <person name="Danchin A."/>
        </authorList>
    </citation>
    <scope>NUCLEOTIDE SEQUENCE [LARGE SCALE GENOMIC DNA]</scope>
    <source>
        <strain>168</strain>
    </source>
</reference>
<sequence>MLEKMGIVVAFLISLTVLTINSLTIVEKVRNLKNGTSKKKKRIRKRLRPKRQRQRIRR</sequence>